<dbReference type="EC" id="7.1.1.-" evidence="1"/>
<dbReference type="EMBL" id="CP001344">
    <property type="protein sequence ID" value="ACL44036.1"/>
    <property type="molecule type" value="Genomic_DNA"/>
</dbReference>
<dbReference type="SMR" id="B8HQP6"/>
<dbReference type="STRING" id="395961.Cyan7425_1667"/>
<dbReference type="KEGG" id="cyn:Cyan7425_1667"/>
<dbReference type="eggNOG" id="COG1143">
    <property type="taxonomic scope" value="Bacteria"/>
</dbReference>
<dbReference type="HOGENOM" id="CLU_122804_0_0_3"/>
<dbReference type="OrthoDB" id="9798098at2"/>
<dbReference type="GO" id="GO:0031676">
    <property type="term" value="C:plasma membrane-derived thylakoid membrane"/>
    <property type="evidence" value="ECO:0007669"/>
    <property type="project" value="UniProtKB-SubCell"/>
</dbReference>
<dbReference type="GO" id="GO:0051539">
    <property type="term" value="F:4 iron, 4 sulfur cluster binding"/>
    <property type="evidence" value="ECO:0007669"/>
    <property type="project" value="UniProtKB-KW"/>
</dbReference>
<dbReference type="GO" id="GO:0005506">
    <property type="term" value="F:iron ion binding"/>
    <property type="evidence" value="ECO:0007669"/>
    <property type="project" value="UniProtKB-UniRule"/>
</dbReference>
<dbReference type="GO" id="GO:0008137">
    <property type="term" value="F:NADH dehydrogenase (ubiquinone) activity"/>
    <property type="evidence" value="ECO:0007669"/>
    <property type="project" value="InterPro"/>
</dbReference>
<dbReference type="GO" id="GO:0048038">
    <property type="term" value="F:quinone binding"/>
    <property type="evidence" value="ECO:0007669"/>
    <property type="project" value="UniProtKB-KW"/>
</dbReference>
<dbReference type="GO" id="GO:0019684">
    <property type="term" value="P:photosynthesis, light reaction"/>
    <property type="evidence" value="ECO:0007669"/>
    <property type="project" value="UniProtKB-UniRule"/>
</dbReference>
<dbReference type="Gene3D" id="3.30.70.3270">
    <property type="match status" value="1"/>
</dbReference>
<dbReference type="HAMAP" id="MF_01351">
    <property type="entry name" value="NDH1_NuoI"/>
    <property type="match status" value="1"/>
</dbReference>
<dbReference type="InterPro" id="IPR017896">
    <property type="entry name" value="4Fe4S_Fe-S-bd"/>
</dbReference>
<dbReference type="InterPro" id="IPR017900">
    <property type="entry name" value="4Fe4S_Fe_S_CS"/>
</dbReference>
<dbReference type="InterPro" id="IPR010226">
    <property type="entry name" value="NADH_quinone_OxRdtase_chainI"/>
</dbReference>
<dbReference type="InterPro" id="IPR004497">
    <property type="entry name" value="NDHI"/>
</dbReference>
<dbReference type="NCBIfam" id="TIGR00403">
    <property type="entry name" value="ndhI"/>
    <property type="match status" value="1"/>
</dbReference>
<dbReference type="NCBIfam" id="TIGR01971">
    <property type="entry name" value="NuoI"/>
    <property type="match status" value="1"/>
</dbReference>
<dbReference type="NCBIfam" id="NF004537">
    <property type="entry name" value="PRK05888.1-3"/>
    <property type="match status" value="1"/>
</dbReference>
<dbReference type="PANTHER" id="PTHR47275">
    <property type="entry name" value="NAD(P)H-QUINONE OXIDOREDUCTASE SUBUNIT I, CHLOROPLASTIC"/>
    <property type="match status" value="1"/>
</dbReference>
<dbReference type="PANTHER" id="PTHR47275:SF1">
    <property type="entry name" value="NAD(P)H-QUINONE OXIDOREDUCTASE SUBUNIT I, CHLOROPLASTIC"/>
    <property type="match status" value="1"/>
</dbReference>
<dbReference type="Pfam" id="PF12838">
    <property type="entry name" value="Fer4_7"/>
    <property type="match status" value="1"/>
</dbReference>
<dbReference type="SUPFAM" id="SSF54862">
    <property type="entry name" value="4Fe-4S ferredoxins"/>
    <property type="match status" value="1"/>
</dbReference>
<dbReference type="PROSITE" id="PS00198">
    <property type="entry name" value="4FE4S_FER_1"/>
    <property type="match status" value="2"/>
</dbReference>
<dbReference type="PROSITE" id="PS51379">
    <property type="entry name" value="4FE4S_FER_2"/>
    <property type="match status" value="2"/>
</dbReference>
<feature type="chain" id="PRO_1000166636" description="NAD(P)H-quinone oxidoreductase subunit I">
    <location>
        <begin position="1"/>
        <end position="193"/>
    </location>
</feature>
<feature type="domain" description="4Fe-4S ferredoxin-type 1" evidence="1">
    <location>
        <begin position="55"/>
        <end position="84"/>
    </location>
</feature>
<feature type="domain" description="4Fe-4S ferredoxin-type 2" evidence="1">
    <location>
        <begin position="95"/>
        <end position="124"/>
    </location>
</feature>
<feature type="binding site" evidence="1">
    <location>
        <position position="64"/>
    </location>
    <ligand>
        <name>[4Fe-4S] cluster</name>
        <dbReference type="ChEBI" id="CHEBI:49883"/>
        <label>1</label>
    </ligand>
</feature>
<feature type="binding site" evidence="1">
    <location>
        <position position="67"/>
    </location>
    <ligand>
        <name>[4Fe-4S] cluster</name>
        <dbReference type="ChEBI" id="CHEBI:49883"/>
        <label>1</label>
    </ligand>
</feature>
<feature type="binding site" evidence="1">
    <location>
        <position position="70"/>
    </location>
    <ligand>
        <name>[4Fe-4S] cluster</name>
        <dbReference type="ChEBI" id="CHEBI:49883"/>
        <label>1</label>
    </ligand>
</feature>
<feature type="binding site" evidence="1">
    <location>
        <position position="74"/>
    </location>
    <ligand>
        <name>[4Fe-4S] cluster</name>
        <dbReference type="ChEBI" id="CHEBI:49883"/>
        <label>2</label>
    </ligand>
</feature>
<feature type="binding site" evidence="1">
    <location>
        <position position="104"/>
    </location>
    <ligand>
        <name>[4Fe-4S] cluster</name>
        <dbReference type="ChEBI" id="CHEBI:49883"/>
        <label>2</label>
    </ligand>
</feature>
<feature type="binding site" evidence="1">
    <location>
        <position position="107"/>
    </location>
    <ligand>
        <name>[4Fe-4S] cluster</name>
        <dbReference type="ChEBI" id="CHEBI:49883"/>
        <label>2</label>
    </ligand>
</feature>
<feature type="binding site" evidence="1">
    <location>
        <position position="110"/>
    </location>
    <ligand>
        <name>[4Fe-4S] cluster</name>
        <dbReference type="ChEBI" id="CHEBI:49883"/>
        <label>2</label>
    </ligand>
</feature>
<feature type="binding site" evidence="1">
    <location>
        <position position="114"/>
    </location>
    <ligand>
        <name>[4Fe-4S] cluster</name>
        <dbReference type="ChEBI" id="CHEBI:49883"/>
        <label>1</label>
    </ligand>
</feature>
<evidence type="ECO:0000255" key="1">
    <source>
        <dbReference type="HAMAP-Rule" id="MF_01351"/>
    </source>
</evidence>
<organism>
    <name type="scientific">Cyanothece sp. (strain PCC 7425 / ATCC 29141)</name>
    <dbReference type="NCBI Taxonomy" id="395961"/>
    <lineage>
        <taxon>Bacteria</taxon>
        <taxon>Bacillati</taxon>
        <taxon>Cyanobacteriota</taxon>
        <taxon>Cyanophyceae</taxon>
        <taxon>Gomontiellales</taxon>
        <taxon>Cyanothecaceae</taxon>
        <taxon>Cyanothece</taxon>
    </lineage>
</organism>
<protein>
    <recommendedName>
        <fullName evidence="1">NAD(P)H-quinone oxidoreductase subunit I</fullName>
        <ecNumber evidence="1">7.1.1.-</ecNumber>
    </recommendedName>
    <alternativeName>
        <fullName evidence="1">NAD(P)H dehydrogenase I subunit I</fullName>
    </alternativeName>
    <alternativeName>
        <fullName evidence="1">NDH-1 subunit I</fullName>
        <shortName evidence="1">NDH-I</shortName>
    </alternativeName>
</protein>
<name>NDHI_CYAP4</name>
<proteinExistence type="inferred from homology"/>
<keyword id="KW-0004">4Fe-4S</keyword>
<keyword id="KW-0408">Iron</keyword>
<keyword id="KW-0411">Iron-sulfur</keyword>
<keyword id="KW-0472">Membrane</keyword>
<keyword id="KW-0479">Metal-binding</keyword>
<keyword id="KW-0520">NAD</keyword>
<keyword id="KW-0521">NADP</keyword>
<keyword id="KW-0618">Plastoquinone</keyword>
<keyword id="KW-0874">Quinone</keyword>
<keyword id="KW-0677">Repeat</keyword>
<keyword id="KW-0793">Thylakoid</keyword>
<keyword id="KW-1278">Translocase</keyword>
<reference key="1">
    <citation type="journal article" date="2011" name="MBio">
        <title>Novel metabolic attributes of the genus Cyanothece, comprising a group of unicellular nitrogen-fixing Cyanobacteria.</title>
        <authorList>
            <person name="Bandyopadhyay A."/>
            <person name="Elvitigala T."/>
            <person name="Welsh E."/>
            <person name="Stockel J."/>
            <person name="Liberton M."/>
            <person name="Min H."/>
            <person name="Sherman L.A."/>
            <person name="Pakrasi H.B."/>
        </authorList>
    </citation>
    <scope>NUCLEOTIDE SEQUENCE [LARGE SCALE GENOMIC DNA]</scope>
    <source>
        <strain>PCC 7425 / ATCC 29141</strain>
    </source>
</reference>
<accession>B8HQP6</accession>
<comment type="function">
    <text evidence="1">NDH-1 shuttles electrons from an unknown electron donor, via FMN and iron-sulfur (Fe-S) centers, to quinones in the respiratory and/or the photosynthetic chain. The immediate electron acceptor for the enzyme in this species is believed to be plastoquinone. Couples the redox reaction to proton translocation, and thus conserves the redox energy in a proton gradient.</text>
</comment>
<comment type="catalytic activity">
    <reaction evidence="1">
        <text>a plastoquinone + NADH + (n+1) H(+)(in) = a plastoquinol + NAD(+) + n H(+)(out)</text>
        <dbReference type="Rhea" id="RHEA:42608"/>
        <dbReference type="Rhea" id="RHEA-COMP:9561"/>
        <dbReference type="Rhea" id="RHEA-COMP:9562"/>
        <dbReference type="ChEBI" id="CHEBI:15378"/>
        <dbReference type="ChEBI" id="CHEBI:17757"/>
        <dbReference type="ChEBI" id="CHEBI:57540"/>
        <dbReference type="ChEBI" id="CHEBI:57945"/>
        <dbReference type="ChEBI" id="CHEBI:62192"/>
    </reaction>
</comment>
<comment type="catalytic activity">
    <reaction evidence="1">
        <text>a plastoquinone + NADPH + (n+1) H(+)(in) = a plastoquinol + NADP(+) + n H(+)(out)</text>
        <dbReference type="Rhea" id="RHEA:42612"/>
        <dbReference type="Rhea" id="RHEA-COMP:9561"/>
        <dbReference type="Rhea" id="RHEA-COMP:9562"/>
        <dbReference type="ChEBI" id="CHEBI:15378"/>
        <dbReference type="ChEBI" id="CHEBI:17757"/>
        <dbReference type="ChEBI" id="CHEBI:57783"/>
        <dbReference type="ChEBI" id="CHEBI:58349"/>
        <dbReference type="ChEBI" id="CHEBI:62192"/>
    </reaction>
</comment>
<comment type="cofactor">
    <cofactor evidence="1">
        <name>[4Fe-4S] cluster</name>
        <dbReference type="ChEBI" id="CHEBI:49883"/>
    </cofactor>
    <text evidence="1">Binds 2 [4Fe-4S] clusters per subunit.</text>
</comment>
<comment type="subunit">
    <text evidence="1">NDH-1 is composed of at least 11 different subunits.</text>
</comment>
<comment type="subcellular location">
    <subcellularLocation>
        <location evidence="1">Cellular thylakoid membrane</location>
        <topology evidence="1">Peripheral membrane protein</topology>
    </subcellularLocation>
</comment>
<comment type="similarity">
    <text evidence="1">Belongs to the complex I 23 kDa subunit family.</text>
</comment>
<gene>
    <name evidence="1" type="primary">ndhI</name>
    <name type="ordered locus">Cyan7425_1667</name>
</gene>
<sequence length="193" mass="22408">MLKFLSKIGDYTKETIQSARYIGQGLAVTFDHMRRRPVTVQYPYEKLIPSERFRGRIHFEFDKCISCEVCVRVCPINLPVVDWEFNKELKKKQLKHYSIDFGVCIFCANCVEYCPTNCLSVTEEYELSVYDRHELNFDNVAMGRLPYKVTEDPMVTPIREFAYLPEGTLSGHDLPEPAKRAGQLPQDIVKTLK</sequence>